<organism>
    <name type="scientific">Wolbachia sp. subsp. Brugia malayi (strain TRS)</name>
    <dbReference type="NCBI Taxonomy" id="292805"/>
    <lineage>
        <taxon>Bacteria</taxon>
        <taxon>Pseudomonadati</taxon>
        <taxon>Pseudomonadota</taxon>
        <taxon>Alphaproteobacteria</taxon>
        <taxon>Rickettsiales</taxon>
        <taxon>Anaplasmataceae</taxon>
        <taxon>Wolbachieae</taxon>
        <taxon>Wolbachia</taxon>
    </lineage>
</organism>
<dbReference type="EC" id="6.3.4.2" evidence="1"/>
<dbReference type="EMBL" id="AE017321">
    <property type="protein sequence ID" value="AAW70760.1"/>
    <property type="molecule type" value="Genomic_DNA"/>
</dbReference>
<dbReference type="RefSeq" id="WP_011256370.1">
    <property type="nucleotide sequence ID" value="NC_006833.1"/>
</dbReference>
<dbReference type="SMR" id="Q5GTB4"/>
<dbReference type="STRING" id="292805.Wbm0169"/>
<dbReference type="KEGG" id="wbm:Wbm0169"/>
<dbReference type="eggNOG" id="COG0504">
    <property type="taxonomic scope" value="Bacteria"/>
</dbReference>
<dbReference type="HOGENOM" id="CLU_011675_5_0_5"/>
<dbReference type="UniPathway" id="UPA00159">
    <property type="reaction ID" value="UER00277"/>
</dbReference>
<dbReference type="Proteomes" id="UP000000534">
    <property type="component" value="Chromosome"/>
</dbReference>
<dbReference type="GO" id="GO:0005829">
    <property type="term" value="C:cytosol"/>
    <property type="evidence" value="ECO:0007669"/>
    <property type="project" value="TreeGrafter"/>
</dbReference>
<dbReference type="GO" id="GO:0005524">
    <property type="term" value="F:ATP binding"/>
    <property type="evidence" value="ECO:0007669"/>
    <property type="project" value="UniProtKB-KW"/>
</dbReference>
<dbReference type="GO" id="GO:0003883">
    <property type="term" value="F:CTP synthase activity"/>
    <property type="evidence" value="ECO:0007669"/>
    <property type="project" value="UniProtKB-UniRule"/>
</dbReference>
<dbReference type="GO" id="GO:0004359">
    <property type="term" value="F:glutaminase activity"/>
    <property type="evidence" value="ECO:0007669"/>
    <property type="project" value="RHEA"/>
</dbReference>
<dbReference type="GO" id="GO:0042802">
    <property type="term" value="F:identical protein binding"/>
    <property type="evidence" value="ECO:0007669"/>
    <property type="project" value="TreeGrafter"/>
</dbReference>
<dbReference type="GO" id="GO:0046872">
    <property type="term" value="F:metal ion binding"/>
    <property type="evidence" value="ECO:0007669"/>
    <property type="project" value="UniProtKB-KW"/>
</dbReference>
<dbReference type="GO" id="GO:0044210">
    <property type="term" value="P:'de novo' CTP biosynthetic process"/>
    <property type="evidence" value="ECO:0007669"/>
    <property type="project" value="UniProtKB-UniRule"/>
</dbReference>
<dbReference type="GO" id="GO:0019856">
    <property type="term" value="P:pyrimidine nucleobase biosynthetic process"/>
    <property type="evidence" value="ECO:0007669"/>
    <property type="project" value="TreeGrafter"/>
</dbReference>
<dbReference type="CDD" id="cd03113">
    <property type="entry name" value="CTPS_N"/>
    <property type="match status" value="1"/>
</dbReference>
<dbReference type="CDD" id="cd01746">
    <property type="entry name" value="GATase1_CTP_Synthase"/>
    <property type="match status" value="1"/>
</dbReference>
<dbReference type="FunFam" id="3.40.50.300:FF:000009">
    <property type="entry name" value="CTP synthase"/>
    <property type="match status" value="1"/>
</dbReference>
<dbReference type="FunFam" id="3.40.50.880:FF:000002">
    <property type="entry name" value="CTP synthase"/>
    <property type="match status" value="1"/>
</dbReference>
<dbReference type="Gene3D" id="3.40.50.880">
    <property type="match status" value="1"/>
</dbReference>
<dbReference type="Gene3D" id="3.40.50.300">
    <property type="entry name" value="P-loop containing nucleotide triphosphate hydrolases"/>
    <property type="match status" value="1"/>
</dbReference>
<dbReference type="HAMAP" id="MF_01227">
    <property type="entry name" value="PyrG"/>
    <property type="match status" value="1"/>
</dbReference>
<dbReference type="InterPro" id="IPR029062">
    <property type="entry name" value="Class_I_gatase-like"/>
</dbReference>
<dbReference type="InterPro" id="IPR004468">
    <property type="entry name" value="CTP_synthase"/>
</dbReference>
<dbReference type="InterPro" id="IPR017456">
    <property type="entry name" value="CTP_synthase_N"/>
</dbReference>
<dbReference type="InterPro" id="IPR017926">
    <property type="entry name" value="GATASE"/>
</dbReference>
<dbReference type="InterPro" id="IPR033828">
    <property type="entry name" value="GATase1_CTP_Synthase"/>
</dbReference>
<dbReference type="InterPro" id="IPR027417">
    <property type="entry name" value="P-loop_NTPase"/>
</dbReference>
<dbReference type="NCBIfam" id="NF003792">
    <property type="entry name" value="PRK05380.1"/>
    <property type="match status" value="1"/>
</dbReference>
<dbReference type="NCBIfam" id="TIGR00337">
    <property type="entry name" value="PyrG"/>
    <property type="match status" value="1"/>
</dbReference>
<dbReference type="PANTHER" id="PTHR11550">
    <property type="entry name" value="CTP SYNTHASE"/>
    <property type="match status" value="1"/>
</dbReference>
<dbReference type="PANTHER" id="PTHR11550:SF0">
    <property type="entry name" value="CTP SYNTHASE-RELATED"/>
    <property type="match status" value="1"/>
</dbReference>
<dbReference type="Pfam" id="PF06418">
    <property type="entry name" value="CTP_synth_N"/>
    <property type="match status" value="1"/>
</dbReference>
<dbReference type="Pfam" id="PF00117">
    <property type="entry name" value="GATase"/>
    <property type="match status" value="1"/>
</dbReference>
<dbReference type="SUPFAM" id="SSF52317">
    <property type="entry name" value="Class I glutamine amidotransferase-like"/>
    <property type="match status" value="1"/>
</dbReference>
<dbReference type="SUPFAM" id="SSF52540">
    <property type="entry name" value="P-loop containing nucleoside triphosphate hydrolases"/>
    <property type="match status" value="1"/>
</dbReference>
<dbReference type="PROSITE" id="PS51273">
    <property type="entry name" value="GATASE_TYPE_1"/>
    <property type="match status" value="1"/>
</dbReference>
<name>PYRG_WOLTR</name>
<reference key="1">
    <citation type="journal article" date="2005" name="PLoS Biol.">
        <title>The Wolbachia genome of Brugia malayi: endosymbiont evolution within a human pathogenic nematode.</title>
        <authorList>
            <person name="Foster J."/>
            <person name="Ganatra M."/>
            <person name="Kamal I."/>
            <person name="Ware J."/>
            <person name="Makarova K."/>
            <person name="Ivanova N."/>
            <person name="Bhattacharyya A."/>
            <person name="Kapatral V."/>
            <person name="Kumar S."/>
            <person name="Posfai J."/>
            <person name="Vincze T."/>
            <person name="Ingram J."/>
            <person name="Moran L."/>
            <person name="Lapidus A."/>
            <person name="Omelchenko M."/>
            <person name="Kyrpides N."/>
            <person name="Ghedin E."/>
            <person name="Wang S."/>
            <person name="Goltsman E."/>
            <person name="Joukov V."/>
            <person name="Ostrovskaya O."/>
            <person name="Tsukerman K."/>
            <person name="Mazur M."/>
            <person name="Comb D."/>
            <person name="Koonin E."/>
            <person name="Slatko B."/>
        </authorList>
    </citation>
    <scope>NUCLEOTIDE SEQUENCE [LARGE SCALE GENOMIC DNA]</scope>
    <source>
        <strain>TRS</strain>
    </source>
</reference>
<accession>Q5GTB4</accession>
<comment type="function">
    <text evidence="1">Catalyzes the ATP-dependent amination of UTP to CTP with either L-glutamine or ammonia as the source of nitrogen. Regulates intracellular CTP levels through interactions with the four ribonucleotide triphosphates.</text>
</comment>
<comment type="catalytic activity">
    <reaction evidence="1">
        <text>UTP + L-glutamine + ATP + H2O = CTP + L-glutamate + ADP + phosphate + 2 H(+)</text>
        <dbReference type="Rhea" id="RHEA:26426"/>
        <dbReference type="ChEBI" id="CHEBI:15377"/>
        <dbReference type="ChEBI" id="CHEBI:15378"/>
        <dbReference type="ChEBI" id="CHEBI:29985"/>
        <dbReference type="ChEBI" id="CHEBI:30616"/>
        <dbReference type="ChEBI" id="CHEBI:37563"/>
        <dbReference type="ChEBI" id="CHEBI:43474"/>
        <dbReference type="ChEBI" id="CHEBI:46398"/>
        <dbReference type="ChEBI" id="CHEBI:58359"/>
        <dbReference type="ChEBI" id="CHEBI:456216"/>
        <dbReference type="EC" id="6.3.4.2"/>
    </reaction>
</comment>
<comment type="catalytic activity">
    <reaction evidence="1">
        <text>L-glutamine + H2O = L-glutamate + NH4(+)</text>
        <dbReference type="Rhea" id="RHEA:15889"/>
        <dbReference type="ChEBI" id="CHEBI:15377"/>
        <dbReference type="ChEBI" id="CHEBI:28938"/>
        <dbReference type="ChEBI" id="CHEBI:29985"/>
        <dbReference type="ChEBI" id="CHEBI:58359"/>
    </reaction>
</comment>
<comment type="catalytic activity">
    <reaction evidence="1">
        <text>UTP + NH4(+) + ATP = CTP + ADP + phosphate + 2 H(+)</text>
        <dbReference type="Rhea" id="RHEA:16597"/>
        <dbReference type="ChEBI" id="CHEBI:15378"/>
        <dbReference type="ChEBI" id="CHEBI:28938"/>
        <dbReference type="ChEBI" id="CHEBI:30616"/>
        <dbReference type="ChEBI" id="CHEBI:37563"/>
        <dbReference type="ChEBI" id="CHEBI:43474"/>
        <dbReference type="ChEBI" id="CHEBI:46398"/>
        <dbReference type="ChEBI" id="CHEBI:456216"/>
    </reaction>
</comment>
<comment type="activity regulation">
    <text evidence="1">Allosterically activated by GTP, when glutamine is the substrate; GTP has no effect on the reaction when ammonia is the substrate. The allosteric effector GTP functions by stabilizing the protein conformation that binds the tetrahedral intermediate(s) formed during glutamine hydrolysis. Inhibited by the product CTP, via allosteric rather than competitive inhibition.</text>
</comment>
<comment type="pathway">
    <text evidence="1">Pyrimidine metabolism; CTP biosynthesis via de novo pathway; CTP from UDP: step 2/2.</text>
</comment>
<comment type="subunit">
    <text evidence="1">Homotetramer.</text>
</comment>
<comment type="miscellaneous">
    <text evidence="1">CTPSs have evolved a hybrid strategy for distinguishing between UTP and CTP. The overlapping regions of the product feedback inhibitory and substrate sites recognize a common feature in both compounds, the triphosphate moiety. To differentiate isosteric substrate and product pyrimidine rings, an additional pocket far from the expected kinase/ligase catalytic site, specifically recognizes the cytosine and ribose portions of the product inhibitor.</text>
</comment>
<comment type="similarity">
    <text evidence="1">Belongs to the CTP synthase family.</text>
</comment>
<gene>
    <name evidence="1" type="primary">pyrG</name>
    <name type="ordered locus">Wbm0169</name>
</gene>
<proteinExistence type="inferred from homology"/>
<sequence length="539" mass="60115">MKEAKFIFVTGGVVSSLGKGLVASSVGALLQAHGFKVRIRKLDPYLNIDPGTMSPTQHGEVFVTEDGAETDLDLGHYERFTGIKATKDDNITTGKMYHELLKKERRGDYLGKTVQVIPHVTDLIKSFIFNGTEGLDFVICEIGGTVGDIESQPFLEAIRQISYKLGKQRVILIHLTLVPYLAVAQELKTKPTQHSVRELNFVGLQPDIILCRSEKEISDNQRGKIANLCNVSLSNVISAPDVSHIYELPVLYNQCGLGTQVLEHFHLSKPKPSLVGWNQIVHSMRHPMQEVTVSIVGKYTEFPDTYKSLVEALSHSAISNRIEVKINWVNSREKSGKPINEKFMGDKLKNSHAILVPGGFGDDGIEGKMLAISYARTNNIPFFGICLGMQLAVIEFARNVIKFKDVHSEEFYTCKHPIIKLAGDKNVDLGGTMRLGAYKCNISPNSKMAGAYSDTIISERHRHRYIINLDYKDDLEKNGLICSGMSEDGTYIEAVELENHPWFIGVQFHPEFQSKPFSPHPLFVSFIKAVVNKVKKTEG</sequence>
<evidence type="ECO:0000255" key="1">
    <source>
        <dbReference type="HAMAP-Rule" id="MF_01227"/>
    </source>
</evidence>
<keyword id="KW-0067">ATP-binding</keyword>
<keyword id="KW-0315">Glutamine amidotransferase</keyword>
<keyword id="KW-0436">Ligase</keyword>
<keyword id="KW-0460">Magnesium</keyword>
<keyword id="KW-0479">Metal-binding</keyword>
<keyword id="KW-0547">Nucleotide-binding</keyword>
<keyword id="KW-0665">Pyrimidine biosynthesis</keyword>
<keyword id="KW-1185">Reference proteome</keyword>
<protein>
    <recommendedName>
        <fullName evidence="1">CTP synthase</fullName>
        <ecNumber evidence="1">6.3.4.2</ecNumber>
    </recommendedName>
    <alternativeName>
        <fullName evidence="1">Cytidine 5'-triphosphate synthase</fullName>
    </alternativeName>
    <alternativeName>
        <fullName evidence="1">Cytidine triphosphate synthetase</fullName>
        <shortName evidence="1">CTP synthetase</shortName>
        <shortName evidence="1">CTPS</shortName>
    </alternativeName>
    <alternativeName>
        <fullName evidence="1">UTP--ammonia ligase</fullName>
    </alternativeName>
</protein>
<feature type="chain" id="PRO_0000266261" description="CTP synthase">
    <location>
        <begin position="1"/>
        <end position="539"/>
    </location>
</feature>
<feature type="domain" description="Glutamine amidotransferase type-1" evidence="1">
    <location>
        <begin position="292"/>
        <end position="536"/>
    </location>
</feature>
<feature type="region of interest" description="Amidoligase domain" evidence="1">
    <location>
        <begin position="1"/>
        <end position="267"/>
    </location>
</feature>
<feature type="active site" description="Nucleophile; for glutamine hydrolysis" evidence="1">
    <location>
        <position position="386"/>
    </location>
</feature>
<feature type="active site" evidence="1">
    <location>
        <position position="509"/>
    </location>
</feature>
<feature type="active site" evidence="1">
    <location>
        <position position="511"/>
    </location>
</feature>
<feature type="binding site" evidence="1">
    <location>
        <position position="15"/>
    </location>
    <ligand>
        <name>CTP</name>
        <dbReference type="ChEBI" id="CHEBI:37563"/>
        <note>allosteric inhibitor</note>
    </ligand>
</feature>
<feature type="binding site" evidence="1">
    <location>
        <position position="15"/>
    </location>
    <ligand>
        <name>UTP</name>
        <dbReference type="ChEBI" id="CHEBI:46398"/>
    </ligand>
</feature>
<feature type="binding site" evidence="1">
    <location>
        <begin position="16"/>
        <end position="21"/>
    </location>
    <ligand>
        <name>ATP</name>
        <dbReference type="ChEBI" id="CHEBI:30616"/>
    </ligand>
</feature>
<feature type="binding site" evidence="1">
    <location>
        <position position="73"/>
    </location>
    <ligand>
        <name>ATP</name>
        <dbReference type="ChEBI" id="CHEBI:30616"/>
    </ligand>
</feature>
<feature type="binding site" evidence="1">
    <location>
        <position position="73"/>
    </location>
    <ligand>
        <name>Mg(2+)</name>
        <dbReference type="ChEBI" id="CHEBI:18420"/>
    </ligand>
</feature>
<feature type="binding site" evidence="1">
    <location>
        <position position="141"/>
    </location>
    <ligand>
        <name>Mg(2+)</name>
        <dbReference type="ChEBI" id="CHEBI:18420"/>
    </ligand>
</feature>
<feature type="binding site" evidence="1">
    <location>
        <begin position="148"/>
        <end position="150"/>
    </location>
    <ligand>
        <name>CTP</name>
        <dbReference type="ChEBI" id="CHEBI:37563"/>
        <note>allosteric inhibitor</note>
    </ligand>
</feature>
<feature type="binding site" evidence="1">
    <location>
        <begin position="188"/>
        <end position="193"/>
    </location>
    <ligand>
        <name>CTP</name>
        <dbReference type="ChEBI" id="CHEBI:37563"/>
        <note>allosteric inhibitor</note>
    </ligand>
</feature>
<feature type="binding site" evidence="1">
    <location>
        <begin position="188"/>
        <end position="193"/>
    </location>
    <ligand>
        <name>UTP</name>
        <dbReference type="ChEBI" id="CHEBI:46398"/>
    </ligand>
</feature>
<feature type="binding site" evidence="1">
    <location>
        <position position="224"/>
    </location>
    <ligand>
        <name>CTP</name>
        <dbReference type="ChEBI" id="CHEBI:37563"/>
        <note>allosteric inhibitor</note>
    </ligand>
</feature>
<feature type="binding site" evidence="1">
    <location>
        <position position="224"/>
    </location>
    <ligand>
        <name>UTP</name>
        <dbReference type="ChEBI" id="CHEBI:46398"/>
    </ligand>
</feature>
<feature type="binding site" evidence="1">
    <location>
        <position position="359"/>
    </location>
    <ligand>
        <name>L-glutamine</name>
        <dbReference type="ChEBI" id="CHEBI:58359"/>
    </ligand>
</feature>
<feature type="binding site" evidence="1">
    <location>
        <begin position="387"/>
        <end position="390"/>
    </location>
    <ligand>
        <name>L-glutamine</name>
        <dbReference type="ChEBI" id="CHEBI:58359"/>
    </ligand>
</feature>
<feature type="binding site" evidence="1">
    <location>
        <position position="410"/>
    </location>
    <ligand>
        <name>L-glutamine</name>
        <dbReference type="ChEBI" id="CHEBI:58359"/>
    </ligand>
</feature>
<feature type="binding site" evidence="1">
    <location>
        <position position="464"/>
    </location>
    <ligand>
        <name>L-glutamine</name>
        <dbReference type="ChEBI" id="CHEBI:58359"/>
    </ligand>
</feature>